<evidence type="ECO:0000255" key="1">
    <source>
        <dbReference type="HAMAP-Rule" id="MF_00412"/>
    </source>
</evidence>
<reference key="1">
    <citation type="submission" date="2007-05" db="EMBL/GenBank/DDBJ databases">
        <title>Complete sequence of Dehalococcoides sp. BAV1.</title>
        <authorList>
            <consortium name="US DOE Joint Genome Institute"/>
            <person name="Copeland A."/>
            <person name="Lucas S."/>
            <person name="Lapidus A."/>
            <person name="Barry K."/>
            <person name="Detter J.C."/>
            <person name="Glavina del Rio T."/>
            <person name="Hammon N."/>
            <person name="Israni S."/>
            <person name="Pitluck S."/>
            <person name="Lowry S."/>
            <person name="Clum A."/>
            <person name="Schmutz J."/>
            <person name="Larimer F."/>
            <person name="Land M."/>
            <person name="Hauser L."/>
            <person name="Kyrpides N."/>
            <person name="Kim E."/>
            <person name="Ritalahti K.M."/>
            <person name="Loeffler F."/>
            <person name="Richardson P."/>
        </authorList>
    </citation>
    <scope>NUCLEOTIDE SEQUENCE [LARGE SCALE GENOMIC DNA]</scope>
    <source>
        <strain>ATCC BAA-2100 / JCM 16839 / KCTC 5957 / BAV1</strain>
    </source>
</reference>
<gene>
    <name evidence="1" type="primary">proA</name>
    <name type="ordered locus">DehaBAV1_1099</name>
</gene>
<organism>
    <name type="scientific">Dehalococcoides mccartyi (strain ATCC BAA-2100 / JCM 16839 / KCTC 5957 / BAV1)</name>
    <dbReference type="NCBI Taxonomy" id="216389"/>
    <lineage>
        <taxon>Bacteria</taxon>
        <taxon>Bacillati</taxon>
        <taxon>Chloroflexota</taxon>
        <taxon>Dehalococcoidia</taxon>
        <taxon>Dehalococcoidales</taxon>
        <taxon>Dehalococcoidaceae</taxon>
        <taxon>Dehalococcoides</taxon>
    </lineage>
</organism>
<comment type="function">
    <text evidence="1">Catalyzes the NADPH-dependent reduction of L-glutamate 5-phosphate into L-glutamate 5-semialdehyde and phosphate. The product spontaneously undergoes cyclization to form 1-pyrroline-5-carboxylate.</text>
</comment>
<comment type="catalytic activity">
    <reaction evidence="1">
        <text>L-glutamate 5-semialdehyde + phosphate + NADP(+) = L-glutamyl 5-phosphate + NADPH + H(+)</text>
        <dbReference type="Rhea" id="RHEA:19541"/>
        <dbReference type="ChEBI" id="CHEBI:15378"/>
        <dbReference type="ChEBI" id="CHEBI:43474"/>
        <dbReference type="ChEBI" id="CHEBI:57783"/>
        <dbReference type="ChEBI" id="CHEBI:58066"/>
        <dbReference type="ChEBI" id="CHEBI:58274"/>
        <dbReference type="ChEBI" id="CHEBI:58349"/>
        <dbReference type="EC" id="1.2.1.41"/>
    </reaction>
</comment>
<comment type="pathway">
    <text evidence="1">Amino-acid biosynthesis; L-proline biosynthesis; L-glutamate 5-semialdehyde from L-glutamate: step 2/2.</text>
</comment>
<comment type="subcellular location">
    <subcellularLocation>
        <location evidence="1">Cytoplasm</location>
    </subcellularLocation>
</comment>
<comment type="similarity">
    <text evidence="1">Belongs to the gamma-glutamyl phosphate reductase family.</text>
</comment>
<protein>
    <recommendedName>
        <fullName evidence="1">Gamma-glutamyl phosphate reductase</fullName>
        <shortName evidence="1">GPR</shortName>
        <ecNumber evidence="1">1.2.1.41</ecNumber>
    </recommendedName>
    <alternativeName>
        <fullName evidence="1">Glutamate-5-semialdehyde dehydrogenase</fullName>
    </alternativeName>
    <alternativeName>
        <fullName evidence="1">Glutamyl-gamma-semialdehyde dehydrogenase</fullName>
        <shortName evidence="1">GSA dehydrogenase</shortName>
    </alternativeName>
</protein>
<name>PROA_DEHMB</name>
<feature type="chain" id="PRO_1000080481" description="Gamma-glutamyl phosphate reductase">
    <location>
        <begin position="1"/>
        <end position="424"/>
    </location>
</feature>
<sequence>MEKALLEIEEKARLARAASRPLSYASSAQKDAALKNIARCLLDNGPAILEANLKDQNEAKASGMLPAMLDRLIIDQSRLEGIAKDTFAIAALPDPVGEIFDMNTMPNGLIIGKKRVPLGVIAAIYESRPNVTVDIASLCLKAGNAVILRGGKETIHSNTILAKLIRQAVEQAGLPKEAVQFIENTDRNLVNHLLKLSDQIDLVIPRGGAGLISYVKQNSFIPVVAGGIGVVHVYVDANAKVTDAVNIAYNSKVQRPTVCNAMDTLLVHKDIAPVFLPAVAAEWSKAGVEIRADEAALKILENTFGCKLIPATPDDWGKEFLALIAAVKVVDSLDEALSHIARYGSGHTESIVTQNYTSSQRFLNEVDAAAVMVNASTRFTDGSQFGLGAELGISTQKMHARGPMGLKEITSYKWIVYGSGQIRG</sequence>
<accession>A5FQ48</accession>
<proteinExistence type="inferred from homology"/>
<dbReference type="EC" id="1.2.1.41" evidence="1"/>
<dbReference type="EMBL" id="CP000688">
    <property type="protein sequence ID" value="ABQ17679.1"/>
    <property type="molecule type" value="Genomic_DNA"/>
</dbReference>
<dbReference type="SMR" id="A5FQ48"/>
<dbReference type="KEGG" id="deb:DehaBAV1_1099"/>
<dbReference type="PATRIC" id="fig|216389.18.peg.1161"/>
<dbReference type="HOGENOM" id="CLU_030231_0_0_0"/>
<dbReference type="UniPathway" id="UPA00098">
    <property type="reaction ID" value="UER00360"/>
</dbReference>
<dbReference type="GO" id="GO:0005737">
    <property type="term" value="C:cytoplasm"/>
    <property type="evidence" value="ECO:0007669"/>
    <property type="project" value="UniProtKB-SubCell"/>
</dbReference>
<dbReference type="GO" id="GO:0004350">
    <property type="term" value="F:glutamate-5-semialdehyde dehydrogenase activity"/>
    <property type="evidence" value="ECO:0007669"/>
    <property type="project" value="UniProtKB-UniRule"/>
</dbReference>
<dbReference type="GO" id="GO:0050661">
    <property type="term" value="F:NADP binding"/>
    <property type="evidence" value="ECO:0007669"/>
    <property type="project" value="InterPro"/>
</dbReference>
<dbReference type="GO" id="GO:0055129">
    <property type="term" value="P:L-proline biosynthetic process"/>
    <property type="evidence" value="ECO:0007669"/>
    <property type="project" value="UniProtKB-UniRule"/>
</dbReference>
<dbReference type="CDD" id="cd07079">
    <property type="entry name" value="ALDH_F18-19_ProA-GPR"/>
    <property type="match status" value="1"/>
</dbReference>
<dbReference type="FunFam" id="3.40.309.10:FF:000006">
    <property type="entry name" value="Gamma-glutamyl phosphate reductase"/>
    <property type="match status" value="1"/>
</dbReference>
<dbReference type="Gene3D" id="3.40.605.10">
    <property type="entry name" value="Aldehyde Dehydrogenase, Chain A, domain 1"/>
    <property type="match status" value="1"/>
</dbReference>
<dbReference type="Gene3D" id="3.40.309.10">
    <property type="entry name" value="Aldehyde Dehydrogenase, Chain A, domain 2"/>
    <property type="match status" value="1"/>
</dbReference>
<dbReference type="HAMAP" id="MF_00412">
    <property type="entry name" value="ProA"/>
    <property type="match status" value="1"/>
</dbReference>
<dbReference type="InterPro" id="IPR016161">
    <property type="entry name" value="Ald_DH/histidinol_DH"/>
</dbReference>
<dbReference type="InterPro" id="IPR016163">
    <property type="entry name" value="Ald_DH_C"/>
</dbReference>
<dbReference type="InterPro" id="IPR016162">
    <property type="entry name" value="Ald_DH_N"/>
</dbReference>
<dbReference type="InterPro" id="IPR015590">
    <property type="entry name" value="Aldehyde_DH_dom"/>
</dbReference>
<dbReference type="InterPro" id="IPR020593">
    <property type="entry name" value="G-glutamylP_reductase_CS"/>
</dbReference>
<dbReference type="InterPro" id="IPR012134">
    <property type="entry name" value="Glu-5-SA_DH"/>
</dbReference>
<dbReference type="InterPro" id="IPR000965">
    <property type="entry name" value="GPR_dom"/>
</dbReference>
<dbReference type="NCBIfam" id="NF001221">
    <property type="entry name" value="PRK00197.1"/>
    <property type="match status" value="1"/>
</dbReference>
<dbReference type="NCBIfam" id="TIGR00407">
    <property type="entry name" value="proA"/>
    <property type="match status" value="1"/>
</dbReference>
<dbReference type="PANTHER" id="PTHR11063:SF8">
    <property type="entry name" value="DELTA-1-PYRROLINE-5-CARBOXYLATE SYNTHASE"/>
    <property type="match status" value="1"/>
</dbReference>
<dbReference type="PANTHER" id="PTHR11063">
    <property type="entry name" value="GLUTAMATE SEMIALDEHYDE DEHYDROGENASE"/>
    <property type="match status" value="1"/>
</dbReference>
<dbReference type="Pfam" id="PF00171">
    <property type="entry name" value="Aldedh"/>
    <property type="match status" value="1"/>
</dbReference>
<dbReference type="PIRSF" id="PIRSF000151">
    <property type="entry name" value="GPR"/>
    <property type="match status" value="1"/>
</dbReference>
<dbReference type="SUPFAM" id="SSF53720">
    <property type="entry name" value="ALDH-like"/>
    <property type="match status" value="1"/>
</dbReference>
<dbReference type="PROSITE" id="PS01223">
    <property type="entry name" value="PROA"/>
    <property type="match status" value="1"/>
</dbReference>
<keyword id="KW-0028">Amino-acid biosynthesis</keyword>
<keyword id="KW-0963">Cytoplasm</keyword>
<keyword id="KW-0521">NADP</keyword>
<keyword id="KW-0560">Oxidoreductase</keyword>
<keyword id="KW-0641">Proline biosynthesis</keyword>